<comment type="function">
    <text evidence="1">PPIases accelerate the folding of proteins. It catalyzes the cis-trans isomerization of proline imidic peptide bonds in oligopeptides (By similarity).</text>
</comment>
<comment type="catalytic activity">
    <reaction>
        <text>[protein]-peptidylproline (omega=180) = [protein]-peptidylproline (omega=0)</text>
        <dbReference type="Rhea" id="RHEA:16237"/>
        <dbReference type="Rhea" id="RHEA-COMP:10747"/>
        <dbReference type="Rhea" id="RHEA-COMP:10748"/>
        <dbReference type="ChEBI" id="CHEBI:83833"/>
        <dbReference type="ChEBI" id="CHEBI:83834"/>
        <dbReference type="EC" id="5.2.1.8"/>
    </reaction>
</comment>
<comment type="subcellular location">
    <subcellularLocation>
        <location evidence="4">Plastid</location>
        <location evidence="4">Chloroplast thylakoid lumen</location>
    </subcellularLocation>
</comment>
<comment type="similarity">
    <text evidence="5">Belongs to the FKBP-type PPIase family.</text>
</comment>
<keyword id="KW-0150">Chloroplast</keyword>
<keyword id="KW-0413">Isomerase</keyword>
<keyword id="KW-0934">Plastid</keyword>
<keyword id="KW-1185">Reference proteome</keyword>
<keyword id="KW-0697">Rotamase</keyword>
<keyword id="KW-0793">Thylakoid</keyword>
<keyword id="KW-0809">Transit peptide</keyword>
<evidence type="ECO:0000250" key="1"/>
<evidence type="ECO:0000255" key="2"/>
<evidence type="ECO:0000255" key="3">
    <source>
        <dbReference type="PROSITE-ProRule" id="PRU00277"/>
    </source>
</evidence>
<evidence type="ECO:0000269" key="4">
    <source>
    </source>
</evidence>
<evidence type="ECO:0000305" key="5"/>
<organism>
    <name type="scientific">Arabidopsis thaliana</name>
    <name type="common">Mouse-ear cress</name>
    <dbReference type="NCBI Taxonomy" id="3702"/>
    <lineage>
        <taxon>Eukaryota</taxon>
        <taxon>Viridiplantae</taxon>
        <taxon>Streptophyta</taxon>
        <taxon>Embryophyta</taxon>
        <taxon>Tracheophyta</taxon>
        <taxon>Spermatophyta</taxon>
        <taxon>Magnoliopsida</taxon>
        <taxon>eudicotyledons</taxon>
        <taxon>Gunneridae</taxon>
        <taxon>Pentapetalae</taxon>
        <taxon>rosids</taxon>
        <taxon>malvids</taxon>
        <taxon>Brassicales</taxon>
        <taxon>Brassicaceae</taxon>
        <taxon>Camelineae</taxon>
        <taxon>Arabidopsis</taxon>
    </lineage>
</organism>
<dbReference type="EC" id="5.2.1.8"/>
<dbReference type="EMBL" id="AC010927">
    <property type="protein sequence ID" value="AAF04431.1"/>
    <property type="molecule type" value="Genomic_DNA"/>
</dbReference>
<dbReference type="EMBL" id="CP002686">
    <property type="protein sequence ID" value="AEE74855.1"/>
    <property type="molecule type" value="Genomic_DNA"/>
</dbReference>
<dbReference type="EMBL" id="AY094442">
    <property type="protein sequence ID" value="AAM19814.1"/>
    <property type="molecule type" value="mRNA"/>
</dbReference>
<dbReference type="EMBL" id="AY122895">
    <property type="protein sequence ID" value="AAM67428.1"/>
    <property type="molecule type" value="mRNA"/>
</dbReference>
<dbReference type="RefSeq" id="NP_187617.1">
    <property type="nucleotide sequence ID" value="NM_111841.5"/>
</dbReference>
<dbReference type="SMR" id="Q9SR70"/>
<dbReference type="FunCoup" id="Q9SR70">
    <property type="interactions" value="1072"/>
</dbReference>
<dbReference type="STRING" id="3702.Q9SR70"/>
<dbReference type="PaxDb" id="3702-AT3G10060.1"/>
<dbReference type="ProteomicsDB" id="230425"/>
<dbReference type="EnsemblPlants" id="AT3G10060.1">
    <property type="protein sequence ID" value="AT3G10060.1"/>
    <property type="gene ID" value="AT3G10060"/>
</dbReference>
<dbReference type="GeneID" id="820167"/>
<dbReference type="Gramene" id="AT3G10060.1">
    <property type="protein sequence ID" value="AT3G10060.1"/>
    <property type="gene ID" value="AT3G10060"/>
</dbReference>
<dbReference type="KEGG" id="ath:AT3G10060"/>
<dbReference type="Araport" id="AT3G10060"/>
<dbReference type="TAIR" id="AT3G10060"/>
<dbReference type="eggNOG" id="KOG0552">
    <property type="taxonomic scope" value="Eukaryota"/>
</dbReference>
<dbReference type="HOGENOM" id="CLU_089785_2_1_1"/>
<dbReference type="InParanoid" id="Q9SR70"/>
<dbReference type="OMA" id="WRGITFM"/>
<dbReference type="PhylomeDB" id="Q9SR70"/>
<dbReference type="PRO" id="PR:Q9SR70"/>
<dbReference type="Proteomes" id="UP000006548">
    <property type="component" value="Chromosome 3"/>
</dbReference>
<dbReference type="ExpressionAtlas" id="Q9SR70">
    <property type="expression patterns" value="baseline and differential"/>
</dbReference>
<dbReference type="GO" id="GO:0009507">
    <property type="term" value="C:chloroplast"/>
    <property type="evidence" value="ECO:0007005"/>
    <property type="project" value="TAIR"/>
</dbReference>
<dbReference type="GO" id="GO:0009534">
    <property type="term" value="C:chloroplast thylakoid"/>
    <property type="evidence" value="ECO:0007005"/>
    <property type="project" value="TAIR"/>
</dbReference>
<dbReference type="GO" id="GO:0009543">
    <property type="term" value="C:chloroplast thylakoid lumen"/>
    <property type="evidence" value="ECO:0007669"/>
    <property type="project" value="UniProtKB-SubCell"/>
</dbReference>
<dbReference type="GO" id="GO:0009535">
    <property type="term" value="C:chloroplast thylakoid membrane"/>
    <property type="evidence" value="ECO:0007005"/>
    <property type="project" value="TAIR"/>
</dbReference>
<dbReference type="GO" id="GO:0005829">
    <property type="term" value="C:cytosol"/>
    <property type="evidence" value="ECO:0007005"/>
    <property type="project" value="TAIR"/>
</dbReference>
<dbReference type="GO" id="GO:0009579">
    <property type="term" value="C:thylakoid"/>
    <property type="evidence" value="ECO:0007005"/>
    <property type="project" value="TAIR"/>
</dbReference>
<dbReference type="GO" id="GO:0003755">
    <property type="term" value="F:peptidyl-prolyl cis-trans isomerase activity"/>
    <property type="evidence" value="ECO:0007669"/>
    <property type="project" value="UniProtKB-KW"/>
</dbReference>
<dbReference type="FunFam" id="3.10.50.40:FF:000055">
    <property type="entry name" value="Peptidylprolyl isomerase"/>
    <property type="match status" value="1"/>
</dbReference>
<dbReference type="Gene3D" id="3.10.50.40">
    <property type="match status" value="1"/>
</dbReference>
<dbReference type="InterPro" id="IPR044180">
    <property type="entry name" value="FKBP18-like"/>
</dbReference>
<dbReference type="InterPro" id="IPR046357">
    <property type="entry name" value="PPIase_dom_sf"/>
</dbReference>
<dbReference type="InterPro" id="IPR001179">
    <property type="entry name" value="PPIase_FKBP_dom"/>
</dbReference>
<dbReference type="PANTHER" id="PTHR47862">
    <property type="entry name" value="PEPTIDYL-PROLYL CIS-TRANS ISOMERASE FKBP18, CHLOROPLASTIC"/>
    <property type="match status" value="1"/>
</dbReference>
<dbReference type="PANTHER" id="PTHR47862:SF2">
    <property type="entry name" value="PEPTIDYLPROLYL ISOMERASE"/>
    <property type="match status" value="1"/>
</dbReference>
<dbReference type="Pfam" id="PF00254">
    <property type="entry name" value="FKBP_C"/>
    <property type="match status" value="1"/>
</dbReference>
<dbReference type="SUPFAM" id="SSF54534">
    <property type="entry name" value="FKBP-like"/>
    <property type="match status" value="1"/>
</dbReference>
<dbReference type="PROSITE" id="PS50059">
    <property type="entry name" value="FKBP_PPIASE"/>
    <property type="match status" value="1"/>
</dbReference>
<name>FK164_ARATH</name>
<sequence>MILTMKLVHPLHHSLSSSIPFPSRKRQSKPYRCSLPSPGCEKVIRTETVLPPAPVSCEGRRVLLGCLLATASGILSTGSAEAVSTSRRALRASKLPESDFTTLPNGLKYYDIKVGNGAEAVKGSRVAVHYVAKWKGITFMTSRQGLGVGGGTPYGFDVGQSERGNVLKGLDLGVEGMRVGGQRLVIVPPELAYGKKGVQEIPPNATIELDIELLSIKQSPFGTPVKIVEG</sequence>
<feature type="transit peptide" description="Chloroplast" evidence="2">
    <location>
        <begin position="1"/>
        <end position="56"/>
    </location>
</feature>
<feature type="transit peptide" description="Thylakoid">
    <location>
        <begin position="57"/>
        <end status="unknown"/>
    </location>
</feature>
<feature type="chain" id="PRO_0000416131" description="Peptidyl-prolyl cis-trans isomerase FKBP16-4, chloroplastic">
    <location>
        <begin status="unknown"/>
        <end position="230"/>
    </location>
</feature>
<feature type="domain" description="PPIase FKBP-type" evidence="3">
    <location>
        <begin position="123"/>
        <end position="217"/>
    </location>
</feature>
<accession>Q9SR70</accession>
<protein>
    <recommendedName>
        <fullName>Peptidyl-prolyl cis-trans isomerase FKBP16-4, chloroplastic</fullName>
        <shortName>PPIase FKBP16-4</shortName>
        <ecNumber>5.2.1.8</ecNumber>
    </recommendedName>
    <alternativeName>
        <fullName>FK506-binding protein 16-4</fullName>
        <shortName>AtFKBP16-4</shortName>
    </alternativeName>
    <alternativeName>
        <fullName>Immunophilin FKBP16-4</fullName>
    </alternativeName>
    <alternativeName>
        <fullName>Rotamase</fullName>
    </alternativeName>
</protein>
<gene>
    <name type="primary">FKBP16-4</name>
    <name type="synonym">FKBP24-2</name>
    <name type="ordered locus">At3g10060</name>
    <name type="ORF">T22K18.11</name>
</gene>
<reference key="1">
    <citation type="journal article" date="2000" name="Nature">
        <title>Sequence and analysis of chromosome 3 of the plant Arabidopsis thaliana.</title>
        <authorList>
            <person name="Salanoubat M."/>
            <person name="Lemcke K."/>
            <person name="Rieger M."/>
            <person name="Ansorge W."/>
            <person name="Unseld M."/>
            <person name="Fartmann B."/>
            <person name="Valle G."/>
            <person name="Bloecker H."/>
            <person name="Perez-Alonso M."/>
            <person name="Obermaier B."/>
            <person name="Delseny M."/>
            <person name="Boutry M."/>
            <person name="Grivell L.A."/>
            <person name="Mache R."/>
            <person name="Puigdomenech P."/>
            <person name="De Simone V."/>
            <person name="Choisne N."/>
            <person name="Artiguenave F."/>
            <person name="Robert C."/>
            <person name="Brottier P."/>
            <person name="Wincker P."/>
            <person name="Cattolico L."/>
            <person name="Weissenbach J."/>
            <person name="Saurin W."/>
            <person name="Quetier F."/>
            <person name="Schaefer M."/>
            <person name="Mueller-Auer S."/>
            <person name="Gabel C."/>
            <person name="Fuchs M."/>
            <person name="Benes V."/>
            <person name="Wurmbach E."/>
            <person name="Drzonek H."/>
            <person name="Erfle H."/>
            <person name="Jordan N."/>
            <person name="Bangert S."/>
            <person name="Wiedelmann R."/>
            <person name="Kranz H."/>
            <person name="Voss H."/>
            <person name="Holland R."/>
            <person name="Brandt P."/>
            <person name="Nyakatura G."/>
            <person name="Vezzi A."/>
            <person name="D'Angelo M."/>
            <person name="Pallavicini A."/>
            <person name="Toppo S."/>
            <person name="Simionati B."/>
            <person name="Conrad A."/>
            <person name="Hornischer K."/>
            <person name="Kauer G."/>
            <person name="Loehnert T.-H."/>
            <person name="Nordsiek G."/>
            <person name="Reichelt J."/>
            <person name="Scharfe M."/>
            <person name="Schoen O."/>
            <person name="Bargues M."/>
            <person name="Terol J."/>
            <person name="Climent J."/>
            <person name="Navarro P."/>
            <person name="Collado C."/>
            <person name="Perez-Perez A."/>
            <person name="Ottenwaelder B."/>
            <person name="Duchemin D."/>
            <person name="Cooke R."/>
            <person name="Laudie M."/>
            <person name="Berger-Llauro C."/>
            <person name="Purnelle B."/>
            <person name="Masuy D."/>
            <person name="de Haan M."/>
            <person name="Maarse A.C."/>
            <person name="Alcaraz J.-P."/>
            <person name="Cottet A."/>
            <person name="Casacuberta E."/>
            <person name="Monfort A."/>
            <person name="Argiriou A."/>
            <person name="Flores M."/>
            <person name="Liguori R."/>
            <person name="Vitale D."/>
            <person name="Mannhaupt G."/>
            <person name="Haase D."/>
            <person name="Schoof H."/>
            <person name="Rudd S."/>
            <person name="Zaccaria P."/>
            <person name="Mewes H.-W."/>
            <person name="Mayer K.F.X."/>
            <person name="Kaul S."/>
            <person name="Town C.D."/>
            <person name="Koo H.L."/>
            <person name="Tallon L.J."/>
            <person name="Jenkins J."/>
            <person name="Rooney T."/>
            <person name="Rizzo M."/>
            <person name="Walts A."/>
            <person name="Utterback T."/>
            <person name="Fujii C.Y."/>
            <person name="Shea T.P."/>
            <person name="Creasy T.H."/>
            <person name="Haas B."/>
            <person name="Maiti R."/>
            <person name="Wu D."/>
            <person name="Peterson J."/>
            <person name="Van Aken S."/>
            <person name="Pai G."/>
            <person name="Militscher J."/>
            <person name="Sellers P."/>
            <person name="Gill J.E."/>
            <person name="Feldblyum T.V."/>
            <person name="Preuss D."/>
            <person name="Lin X."/>
            <person name="Nierman W.C."/>
            <person name="Salzberg S.L."/>
            <person name="White O."/>
            <person name="Venter J.C."/>
            <person name="Fraser C.M."/>
            <person name="Kaneko T."/>
            <person name="Nakamura Y."/>
            <person name="Sato S."/>
            <person name="Kato T."/>
            <person name="Asamizu E."/>
            <person name="Sasamoto S."/>
            <person name="Kimura T."/>
            <person name="Idesawa K."/>
            <person name="Kawashima K."/>
            <person name="Kishida Y."/>
            <person name="Kiyokawa C."/>
            <person name="Kohara M."/>
            <person name="Matsumoto M."/>
            <person name="Matsuno A."/>
            <person name="Muraki A."/>
            <person name="Nakayama S."/>
            <person name="Nakazaki N."/>
            <person name="Shinpo S."/>
            <person name="Takeuchi C."/>
            <person name="Wada T."/>
            <person name="Watanabe A."/>
            <person name="Yamada M."/>
            <person name="Yasuda M."/>
            <person name="Tabata S."/>
        </authorList>
    </citation>
    <scope>NUCLEOTIDE SEQUENCE [LARGE SCALE GENOMIC DNA]</scope>
    <source>
        <strain>cv. Columbia</strain>
    </source>
</reference>
<reference key="2">
    <citation type="journal article" date="2017" name="Plant J.">
        <title>Araport11: a complete reannotation of the Arabidopsis thaliana reference genome.</title>
        <authorList>
            <person name="Cheng C.Y."/>
            <person name="Krishnakumar V."/>
            <person name="Chan A.P."/>
            <person name="Thibaud-Nissen F."/>
            <person name="Schobel S."/>
            <person name="Town C.D."/>
        </authorList>
    </citation>
    <scope>GENOME REANNOTATION</scope>
    <source>
        <strain>cv. Columbia</strain>
    </source>
</reference>
<reference key="3">
    <citation type="journal article" date="2003" name="Science">
        <title>Empirical analysis of transcriptional activity in the Arabidopsis genome.</title>
        <authorList>
            <person name="Yamada K."/>
            <person name="Lim J."/>
            <person name="Dale J.M."/>
            <person name="Chen H."/>
            <person name="Shinn P."/>
            <person name="Palm C.J."/>
            <person name="Southwick A.M."/>
            <person name="Wu H.C."/>
            <person name="Kim C.J."/>
            <person name="Nguyen M."/>
            <person name="Pham P.K."/>
            <person name="Cheuk R.F."/>
            <person name="Karlin-Newmann G."/>
            <person name="Liu S.X."/>
            <person name="Lam B."/>
            <person name="Sakano H."/>
            <person name="Wu T."/>
            <person name="Yu G."/>
            <person name="Miranda M."/>
            <person name="Quach H.L."/>
            <person name="Tripp M."/>
            <person name="Chang C.H."/>
            <person name="Lee J.M."/>
            <person name="Toriumi M.J."/>
            <person name="Chan M.M."/>
            <person name="Tang C.C."/>
            <person name="Onodera C.S."/>
            <person name="Deng J.M."/>
            <person name="Akiyama K."/>
            <person name="Ansari Y."/>
            <person name="Arakawa T."/>
            <person name="Banh J."/>
            <person name="Banno F."/>
            <person name="Bowser L."/>
            <person name="Brooks S.Y."/>
            <person name="Carninci P."/>
            <person name="Chao Q."/>
            <person name="Choy N."/>
            <person name="Enju A."/>
            <person name="Goldsmith A.D."/>
            <person name="Gurjal M."/>
            <person name="Hansen N.F."/>
            <person name="Hayashizaki Y."/>
            <person name="Johnson-Hopson C."/>
            <person name="Hsuan V.W."/>
            <person name="Iida K."/>
            <person name="Karnes M."/>
            <person name="Khan S."/>
            <person name="Koesema E."/>
            <person name="Ishida J."/>
            <person name="Jiang P.X."/>
            <person name="Jones T."/>
            <person name="Kawai J."/>
            <person name="Kamiya A."/>
            <person name="Meyers C."/>
            <person name="Nakajima M."/>
            <person name="Narusaka M."/>
            <person name="Seki M."/>
            <person name="Sakurai T."/>
            <person name="Satou M."/>
            <person name="Tamse R."/>
            <person name="Vaysberg M."/>
            <person name="Wallender E.K."/>
            <person name="Wong C."/>
            <person name="Yamamura Y."/>
            <person name="Yuan S."/>
            <person name="Shinozaki K."/>
            <person name="Davis R.W."/>
            <person name="Theologis A."/>
            <person name="Ecker J.R."/>
        </authorList>
    </citation>
    <scope>NUCLEOTIDE SEQUENCE [LARGE SCALE MRNA]</scope>
    <source>
        <strain>cv. Columbia</strain>
    </source>
</reference>
<reference key="4">
    <citation type="journal article" date="2002" name="Plant Cell">
        <title>Central functions of the lumenal and peripheral thylakoid proteome of Arabidopsis determined by experimentation and genome-wide prediction.</title>
        <authorList>
            <person name="Peltier J.-B."/>
            <person name="Emanuelsson O."/>
            <person name="Kalume D.E."/>
            <person name="Ytterberg J."/>
            <person name="Friso G."/>
            <person name="Rudella A."/>
            <person name="Liberles D.A."/>
            <person name="Soederberg L."/>
            <person name="Roepstorff P."/>
            <person name="von Heijne G."/>
            <person name="van Wijk K.J."/>
        </authorList>
    </citation>
    <scope>SUBCELLULAR LOCATION</scope>
    <scope>IDENTIFICATION BY MASS SPECTROMETRY</scope>
</reference>
<reference key="5">
    <citation type="journal article" date="2004" name="Plant Physiol.">
        <title>Immunophilins and parvulins. Superfamily of peptidyl prolyl isomerases in Arabidopsis.</title>
        <authorList>
            <person name="He Z."/>
            <person name="Li L."/>
            <person name="Luan S."/>
        </authorList>
    </citation>
    <scope>GENE FAMILY</scope>
    <scope>NOMENCLATURE</scope>
</reference>
<proteinExistence type="evidence at protein level"/>